<name>PA2A1_CERCE</name>
<keyword id="KW-0037">Angiogenesis</keyword>
<keyword id="KW-1203">Blood coagulation cascade inhibiting toxin</keyword>
<keyword id="KW-0106">Calcium</keyword>
<keyword id="KW-0903">Direct protein sequencing</keyword>
<keyword id="KW-1015">Disulfide bond</keyword>
<keyword id="KW-0325">Glycoprotein</keyword>
<keyword id="KW-1199">Hemostasis impairing toxin</keyword>
<keyword id="KW-0378">Hydrolase</keyword>
<keyword id="KW-0442">Lipid degradation</keyword>
<keyword id="KW-0443">Lipid metabolism</keyword>
<keyword id="KW-0479">Metal-binding</keyword>
<keyword id="KW-1201">Platelet aggregation inhibiting toxin</keyword>
<keyword id="KW-0964">Secreted</keyword>
<keyword id="KW-0732">Signal</keyword>
<keyword id="KW-0800">Toxin</keyword>
<comment type="function">
    <text evidence="4 5">Snake venom phospholipase A2 (PLA2) that inhibits blood coagulation and platelet aggregation induced by ADP and arachidonic acid. Inhibits tumor cell adhesion and migration in a dose-dependent manner. Abolishes the attachment of human brain microvascular endothelial cells (HBMEC) to fibrinogen (IC(50)=0.12 uM) and dramatically reduces its adhesion to fibronectin (IC(50)=0.12 uM), whereas no effect is observed on type I collagen, vitronectin or laminin 1. Also blocks the cell migration toward fibronectin and fibrinogen. These effects are not dependent of the catalytic activity, but are mediated by alpha-5/beta-1 (ITGA5/ITGB1) and alpha-v-containing (ITGAV) integrins. Also shows anti-angiogenic activity in chicken chorioallantoix membrane assay. Has a relatively high enzymatic activity. PLA2 catalyzes the calcium-dependent hydrolysis of the 2-acyl groups in 3-sn-phosphoglycerides.</text>
</comment>
<comment type="catalytic activity">
    <reaction evidence="2 3">
        <text>a 1,2-diacyl-sn-glycero-3-phosphocholine + H2O = a 1-acyl-sn-glycero-3-phosphocholine + a fatty acid + H(+)</text>
        <dbReference type="Rhea" id="RHEA:15801"/>
        <dbReference type="ChEBI" id="CHEBI:15377"/>
        <dbReference type="ChEBI" id="CHEBI:15378"/>
        <dbReference type="ChEBI" id="CHEBI:28868"/>
        <dbReference type="ChEBI" id="CHEBI:57643"/>
        <dbReference type="ChEBI" id="CHEBI:58168"/>
        <dbReference type="EC" id="3.1.1.4"/>
    </reaction>
</comment>
<comment type="cofactor">
    <cofactor evidence="5">
        <name>Ca(2+)</name>
        <dbReference type="ChEBI" id="CHEBI:29108"/>
    </cofactor>
    <text evidence="5">Binds 1 Ca(2+) ion.</text>
</comment>
<comment type="subcellular location">
    <subcellularLocation>
        <location evidence="5">Secreted</location>
    </subcellularLocation>
</comment>
<comment type="tissue specificity">
    <text evidence="8">Expressed by the venom gland.</text>
</comment>
<comment type="PTM">
    <text>Glycosylated (2.5%).</text>
</comment>
<comment type="mass spectrometry"/>
<comment type="miscellaneous">
    <text evidence="7">Negative results: does not show cytotoxic activity on human fibrosarcoma and melanoma cell lines.</text>
</comment>
<comment type="similarity">
    <text evidence="6">Belongs to the phospholipase A2 family. Group II subfamily. D49 sub-subfamily.</text>
</comment>
<protein>
    <recommendedName>
        <fullName>Acidic phospholipase A2 CC-PLA2-1</fullName>
        <shortName>svPLA2</shortName>
        <ecNumber>3.1.1.4</ecNumber>
    </recommendedName>
    <alternativeName>
        <fullName>Phosphatidylcholine 2-acylhydrolase</fullName>
    </alternativeName>
</protein>
<feature type="signal peptide" evidence="5">
    <location>
        <begin position="1"/>
        <end position="16"/>
    </location>
</feature>
<feature type="chain" id="PRO_0000377503" description="Acidic phospholipase A2 CC-PLA2-1">
    <location>
        <begin position="17"/>
        <end position="137"/>
    </location>
</feature>
<feature type="active site" evidence="1">
    <location>
        <position position="63"/>
    </location>
</feature>
<feature type="active site" evidence="1">
    <location>
        <position position="104"/>
    </location>
</feature>
<feature type="binding site" evidence="1">
    <location>
        <position position="43"/>
    </location>
    <ligand>
        <name>Ca(2+)</name>
        <dbReference type="ChEBI" id="CHEBI:29108"/>
    </ligand>
</feature>
<feature type="binding site" evidence="1">
    <location>
        <position position="45"/>
    </location>
    <ligand>
        <name>Ca(2+)</name>
        <dbReference type="ChEBI" id="CHEBI:29108"/>
    </ligand>
</feature>
<feature type="binding site" evidence="1">
    <location>
        <position position="47"/>
    </location>
    <ligand>
        <name>Ca(2+)</name>
        <dbReference type="ChEBI" id="CHEBI:29108"/>
    </ligand>
</feature>
<feature type="binding site" evidence="1">
    <location>
        <position position="64"/>
    </location>
    <ligand>
        <name>Ca(2+)</name>
        <dbReference type="ChEBI" id="CHEBI:29108"/>
    </ligand>
</feature>
<feature type="disulfide bond" evidence="1">
    <location>
        <begin position="42"/>
        <end position="130"/>
    </location>
</feature>
<feature type="disulfide bond" evidence="1">
    <location>
        <begin position="44"/>
        <end position="60"/>
    </location>
</feature>
<feature type="disulfide bond" evidence="1">
    <location>
        <begin position="59"/>
        <end position="110"/>
    </location>
</feature>
<feature type="disulfide bond" evidence="1">
    <location>
        <begin position="65"/>
        <end position="137"/>
    </location>
</feature>
<feature type="disulfide bond" evidence="1">
    <location>
        <begin position="66"/>
        <end position="103"/>
    </location>
</feature>
<feature type="disulfide bond" evidence="1">
    <location>
        <begin position="73"/>
        <end position="96"/>
    </location>
</feature>
<feature type="disulfide bond" evidence="1">
    <location>
        <begin position="90"/>
        <end position="101"/>
    </location>
</feature>
<proteinExistence type="evidence at protein level"/>
<reference key="1">
    <citation type="journal article" date="2010" name="Lab. Invest.">
        <title>CC-PLA2-1 and CC-PLA2-2, two Cerastes cerastes venom-derived phospholipases A2, inhibit angiogenesis both in vitro and in vivo.</title>
        <authorList>
            <person name="Kessentini-Zouari R."/>
            <person name="Jebali J."/>
            <person name="Taboubi S."/>
            <person name="Srairi-Abid N."/>
            <person name="Morjen M."/>
            <person name="Kallech-Ziri O."/>
            <person name="Bezzine S."/>
            <person name="Marvaldi J."/>
            <person name="El Ayeb M."/>
            <person name="Marrakchi N."/>
            <person name="Luis J."/>
        </authorList>
    </citation>
    <scope>NUCLEOTIDE SEQUENCE [MRNA]</scope>
    <scope>FUNCTION</scope>
    <scope>3D-STRUCTURE MODELING</scope>
    <source>
        <tissue>Venom</tissue>
        <tissue>Venom gland</tissue>
    </source>
</reference>
<reference key="2">
    <citation type="journal article" date="2009" name="Toxicon">
        <title>Two purified and characterized phospholipases A2 from Cerastes cerastes venom, that inhibit cancerous cell adhesion and migration.</title>
        <authorList>
            <person name="Zouari-Kessentini R."/>
            <person name="Luis J."/>
            <person name="Karray A."/>
            <person name="Kallech-Ziri O."/>
            <person name="Srairi-Abid N."/>
            <person name="Bazaa A."/>
            <person name="Loret E."/>
            <person name="Bezzine S."/>
            <person name="El Ayeb M."/>
            <person name="Marrakchi N."/>
        </authorList>
    </citation>
    <scope>PROTEIN SEQUENCE OF 17-66</scope>
    <scope>FUNCTION</scope>
    <scope>COFACTOR</scope>
    <scope>MASS SPECTROMETRY</scope>
    <scope>SUBCELLULAR LOCATION</scope>
    <source>
        <tissue>Venom</tissue>
    </source>
</reference>
<organism>
    <name type="scientific">Cerastes cerastes</name>
    <name type="common">Horned desert viper</name>
    <dbReference type="NCBI Taxonomy" id="8697"/>
    <lineage>
        <taxon>Eukaryota</taxon>
        <taxon>Metazoa</taxon>
        <taxon>Chordata</taxon>
        <taxon>Craniata</taxon>
        <taxon>Vertebrata</taxon>
        <taxon>Euteleostomi</taxon>
        <taxon>Lepidosauria</taxon>
        <taxon>Squamata</taxon>
        <taxon>Bifurcata</taxon>
        <taxon>Unidentata</taxon>
        <taxon>Episquamata</taxon>
        <taxon>Toxicofera</taxon>
        <taxon>Serpentes</taxon>
        <taxon>Colubroidea</taxon>
        <taxon>Viperidae</taxon>
        <taxon>Viperinae</taxon>
        <taxon>Cerastes</taxon>
    </lineage>
</organism>
<sequence>MRTLWIVAVWLMGVEGNLYQFGKMIKHKTGKSALLSYSAYGCYCGWGGQGKPQDATDHCCFVHDCCYGEVSGCYPKTAFTLKFENQDIICGDEDPCNRAVCECDRVAAICFGENVNTSDKKYLFYSSSYCEEESEQC</sequence>
<evidence type="ECO:0000250" key="1"/>
<evidence type="ECO:0000255" key="2">
    <source>
        <dbReference type="PROSITE-ProRule" id="PRU10035"/>
    </source>
</evidence>
<evidence type="ECO:0000255" key="3">
    <source>
        <dbReference type="PROSITE-ProRule" id="PRU10036"/>
    </source>
</evidence>
<evidence type="ECO:0000269" key="4">
    <source>
    </source>
</evidence>
<evidence type="ECO:0000269" key="5">
    <source ref="2"/>
</evidence>
<evidence type="ECO:0000305" key="6"/>
<evidence type="ECO:0000305" key="7">
    <source>
    </source>
</evidence>
<evidence type="ECO:0000305" key="8">
    <source ref="2"/>
</evidence>
<dbReference type="EC" id="3.1.1.4"/>
<dbReference type="EMBL" id="FJ754186">
    <property type="protein sequence ID" value="ACO92622.1"/>
    <property type="molecule type" value="mRNA"/>
</dbReference>
<dbReference type="SMR" id="P0CAR9"/>
<dbReference type="GO" id="GO:0005576">
    <property type="term" value="C:extracellular region"/>
    <property type="evidence" value="ECO:0007669"/>
    <property type="project" value="UniProtKB-SubCell"/>
</dbReference>
<dbReference type="GO" id="GO:0005509">
    <property type="term" value="F:calcium ion binding"/>
    <property type="evidence" value="ECO:0007669"/>
    <property type="project" value="InterPro"/>
</dbReference>
<dbReference type="GO" id="GO:0047498">
    <property type="term" value="F:calcium-dependent phospholipase A2 activity"/>
    <property type="evidence" value="ECO:0007669"/>
    <property type="project" value="TreeGrafter"/>
</dbReference>
<dbReference type="GO" id="GO:0005543">
    <property type="term" value="F:phospholipid binding"/>
    <property type="evidence" value="ECO:0007669"/>
    <property type="project" value="TreeGrafter"/>
</dbReference>
<dbReference type="GO" id="GO:0090729">
    <property type="term" value="F:toxin activity"/>
    <property type="evidence" value="ECO:0007669"/>
    <property type="project" value="UniProtKB-KW"/>
</dbReference>
<dbReference type="GO" id="GO:0001525">
    <property type="term" value="P:angiogenesis"/>
    <property type="evidence" value="ECO:0007669"/>
    <property type="project" value="UniProtKB-KW"/>
</dbReference>
<dbReference type="GO" id="GO:0050482">
    <property type="term" value="P:arachidonate secretion"/>
    <property type="evidence" value="ECO:0007669"/>
    <property type="project" value="InterPro"/>
</dbReference>
<dbReference type="GO" id="GO:0016042">
    <property type="term" value="P:lipid catabolic process"/>
    <property type="evidence" value="ECO:0007669"/>
    <property type="project" value="UniProtKB-KW"/>
</dbReference>
<dbReference type="GO" id="GO:0006644">
    <property type="term" value="P:phospholipid metabolic process"/>
    <property type="evidence" value="ECO:0007669"/>
    <property type="project" value="InterPro"/>
</dbReference>
<dbReference type="CDD" id="cd00125">
    <property type="entry name" value="PLA2c"/>
    <property type="match status" value="1"/>
</dbReference>
<dbReference type="FunFam" id="1.20.90.10:FF:000001">
    <property type="entry name" value="Basic phospholipase A2 homolog"/>
    <property type="match status" value="1"/>
</dbReference>
<dbReference type="Gene3D" id="1.20.90.10">
    <property type="entry name" value="Phospholipase A2 domain"/>
    <property type="match status" value="1"/>
</dbReference>
<dbReference type="InterPro" id="IPR001211">
    <property type="entry name" value="PLipase_A2"/>
</dbReference>
<dbReference type="InterPro" id="IPR033112">
    <property type="entry name" value="PLipase_A2_Asp_AS"/>
</dbReference>
<dbReference type="InterPro" id="IPR016090">
    <property type="entry name" value="PLipase_A2_dom"/>
</dbReference>
<dbReference type="InterPro" id="IPR036444">
    <property type="entry name" value="PLipase_A2_dom_sf"/>
</dbReference>
<dbReference type="InterPro" id="IPR033113">
    <property type="entry name" value="PLipase_A2_His_AS"/>
</dbReference>
<dbReference type="PANTHER" id="PTHR11716:SF101">
    <property type="entry name" value="BASIC PHOSPHOLIPASE A2 PA-11-LIKE"/>
    <property type="match status" value="1"/>
</dbReference>
<dbReference type="PANTHER" id="PTHR11716">
    <property type="entry name" value="PHOSPHOLIPASE A2 FAMILY MEMBER"/>
    <property type="match status" value="1"/>
</dbReference>
<dbReference type="Pfam" id="PF00068">
    <property type="entry name" value="Phospholip_A2_1"/>
    <property type="match status" value="1"/>
</dbReference>
<dbReference type="PRINTS" id="PR00389">
    <property type="entry name" value="PHPHLIPASEA2"/>
</dbReference>
<dbReference type="SMART" id="SM00085">
    <property type="entry name" value="PA2c"/>
    <property type="match status" value="1"/>
</dbReference>
<dbReference type="SUPFAM" id="SSF48619">
    <property type="entry name" value="Phospholipase A2, PLA2"/>
    <property type="match status" value="1"/>
</dbReference>
<dbReference type="PROSITE" id="PS00119">
    <property type="entry name" value="PA2_ASP"/>
    <property type="match status" value="1"/>
</dbReference>
<dbReference type="PROSITE" id="PS00118">
    <property type="entry name" value="PA2_HIS"/>
    <property type="match status" value="1"/>
</dbReference>
<accession>P0CAR9</accession>
<accession>C3UWC9</accession>